<gene>
    <name type="ordered locus">M6_Spy1067</name>
</gene>
<feature type="chain" id="PRO_0000245622" description="UPF0371 protein M6_Spy1067">
    <location>
        <begin position="1"/>
        <end position="494"/>
    </location>
</feature>
<evidence type="ECO:0000255" key="1">
    <source>
        <dbReference type="HAMAP-Rule" id="MF_01567"/>
    </source>
</evidence>
<evidence type="ECO:0000305" key="2"/>
<name>Y1067_STRP6</name>
<protein>
    <recommendedName>
        <fullName evidence="1">UPF0371 protein M6_Spy1067</fullName>
    </recommendedName>
</protein>
<accession>Q5XBL1</accession>
<proteinExistence type="inferred from homology"/>
<comment type="similarity">
    <text evidence="1">Belongs to the UPF0371 family.</text>
</comment>
<comment type="sequence caution" evidence="2">
    <conflict type="erroneous initiation">
        <sequence resource="EMBL-CDS" id="AAT87202"/>
    </conflict>
</comment>
<organism>
    <name type="scientific">Streptococcus pyogenes serotype M6 (strain ATCC BAA-946 / MGAS10394)</name>
    <dbReference type="NCBI Taxonomy" id="286636"/>
    <lineage>
        <taxon>Bacteria</taxon>
        <taxon>Bacillati</taxon>
        <taxon>Bacillota</taxon>
        <taxon>Bacilli</taxon>
        <taxon>Lactobacillales</taxon>
        <taxon>Streptococcaceae</taxon>
        <taxon>Streptococcus</taxon>
    </lineage>
</organism>
<dbReference type="EMBL" id="CP000003">
    <property type="protein sequence ID" value="AAT87202.1"/>
    <property type="status" value="ALT_INIT"/>
    <property type="molecule type" value="Genomic_DNA"/>
</dbReference>
<dbReference type="RefSeq" id="WP_021340106.1">
    <property type="nucleotide sequence ID" value="NC_006086.1"/>
</dbReference>
<dbReference type="SMR" id="Q5XBL1"/>
<dbReference type="KEGG" id="spa:M6_Spy1067"/>
<dbReference type="HOGENOM" id="CLU_046981_0_0_9"/>
<dbReference type="Proteomes" id="UP000001167">
    <property type="component" value="Chromosome"/>
</dbReference>
<dbReference type="Gene3D" id="1.20.1570.10">
    <property type="entry name" value="dip2346 domain like"/>
    <property type="match status" value="1"/>
</dbReference>
<dbReference type="Gene3D" id="3.10.630.10">
    <property type="entry name" value="dip2346 domain like"/>
    <property type="match status" value="1"/>
</dbReference>
<dbReference type="Gene3D" id="3.40.140.40">
    <property type="entry name" value="Domain of unknown function (DUF1846), C-terminal subdomain"/>
    <property type="match status" value="1"/>
</dbReference>
<dbReference type="HAMAP" id="MF_01567">
    <property type="entry name" value="UPF0371"/>
    <property type="match status" value="1"/>
</dbReference>
<dbReference type="InterPro" id="IPR014999">
    <property type="entry name" value="DUF1846"/>
</dbReference>
<dbReference type="InterPro" id="IPR048441">
    <property type="entry name" value="DUF1846_C"/>
</dbReference>
<dbReference type="InterPro" id="IPR048496">
    <property type="entry name" value="DUF1846_N"/>
</dbReference>
<dbReference type="NCBIfam" id="NF010184">
    <property type="entry name" value="PRK13663.1"/>
    <property type="match status" value="1"/>
</dbReference>
<dbReference type="Pfam" id="PF08903">
    <property type="entry name" value="DUF1846"/>
    <property type="match status" value="1"/>
</dbReference>
<dbReference type="Pfam" id="PF20921">
    <property type="entry name" value="DUF1846_C"/>
    <property type="match status" value="1"/>
</dbReference>
<dbReference type="PIRSF" id="PIRSF033132">
    <property type="entry name" value="DUF1846"/>
    <property type="match status" value="1"/>
</dbReference>
<reference key="1">
    <citation type="journal article" date="2004" name="J. Infect. Dis.">
        <title>Progress toward characterization of the group A Streptococcus metagenome: complete genome sequence of a macrolide-resistant serotype M6 strain.</title>
        <authorList>
            <person name="Banks D.J."/>
            <person name="Porcella S.F."/>
            <person name="Barbian K.D."/>
            <person name="Beres S.B."/>
            <person name="Philips L.E."/>
            <person name="Voyich J.M."/>
            <person name="DeLeo F.R."/>
            <person name="Martin J.M."/>
            <person name="Somerville G.A."/>
            <person name="Musser J.M."/>
        </authorList>
    </citation>
    <scope>NUCLEOTIDE SEQUENCE [LARGE SCALE GENOMIC DNA]</scope>
    <source>
        <strain>ATCC BAA-946 / MGAS10394</strain>
    </source>
</reference>
<sequence length="494" mass="55332">MKTIAFDSNKYLNLQRDHILERISQFDGKLYMEFGGKMLEDYHAARVLPGYEPDNKIKLLKELKEQVEIVIAINANNIEHSKARGDLGISYDQEVFRLIDKFNTLDIYVGSVVITQYNNQPAADAFRKQLEKNGIASYLHYPIKGYPTDINHIISSEGMGKNDYIKTSRNLIVATAPGPGSGKLATCMSQMYHDQINGVKSGYAKFETFPVWNLPLHHPVNLAYEAATADLDDVNMIDPFHLETYGKTAVNYNRDIEVFPVLNRTFERILSKSPYASPTDMGVNMVGFSIVNEEAAIEASKQEIIRRYYQTLVDFKAERVTESAVKKIELLMNDIGVTPDDRHVTVAAHQKAEQTGQPALALQLPNGQIVTGKTSELFGPTAAVIINAIKTLAKIDKTTHLIEPEYVKPIQGLKVNHLGSHNPRLHSNEILIALAITAMTSEEANLAMKELGNLKGSEAHSTVILTEEDKNVLRKLGVNITFDPVYQHHKLYRK</sequence>